<accession>O08399</accession>
<name>GYRB_TREPA</name>
<gene>
    <name evidence="1" type="primary">gyrB</name>
    <name type="ordered locus">TP_1006</name>
</gene>
<feature type="chain" id="PRO_0000145357" description="DNA gyrase subunit B">
    <location>
        <begin position="1"/>
        <end position="637"/>
    </location>
</feature>
<feature type="domain" description="Toprim" evidence="1">
    <location>
        <begin position="422"/>
        <end position="536"/>
    </location>
</feature>
<feature type="binding site" evidence="1">
    <location>
        <position position="428"/>
    </location>
    <ligand>
        <name>Mg(2+)</name>
        <dbReference type="ChEBI" id="CHEBI:18420"/>
        <label>1</label>
        <note>catalytic</note>
    </ligand>
</feature>
<feature type="binding site" evidence="1">
    <location>
        <position position="501"/>
    </location>
    <ligand>
        <name>Mg(2+)</name>
        <dbReference type="ChEBI" id="CHEBI:18420"/>
        <label>1</label>
        <note>catalytic</note>
    </ligand>
</feature>
<feature type="binding site" evidence="1">
    <location>
        <position position="501"/>
    </location>
    <ligand>
        <name>Mg(2+)</name>
        <dbReference type="ChEBI" id="CHEBI:18420"/>
        <label>2</label>
    </ligand>
</feature>
<feature type="binding site" evidence="1">
    <location>
        <position position="503"/>
    </location>
    <ligand>
        <name>Mg(2+)</name>
        <dbReference type="ChEBI" id="CHEBI:18420"/>
        <label>2</label>
    </ligand>
</feature>
<feature type="site" description="Interaction with DNA" evidence="1">
    <location>
        <position position="453"/>
    </location>
</feature>
<feature type="site" description="Interaction with DNA" evidence="1">
    <location>
        <position position="456"/>
    </location>
</feature>
<comment type="function">
    <text evidence="1">A type II topoisomerase that negatively supercoils closed circular double-stranded (ds) DNA in an ATP-dependent manner to modulate DNA topology and maintain chromosomes in an underwound state. Negative supercoiling favors strand separation, and DNA replication, transcription, recombination and repair, all of which involve strand separation. Also able to catalyze the interconversion of other topological isomers of dsDNA rings, including catenanes and knotted rings. Type II topoisomerases break and join 2 DNA strands simultaneously in an ATP-dependent manner.</text>
</comment>
<comment type="catalytic activity">
    <reaction evidence="1">
        <text>ATP-dependent breakage, passage and rejoining of double-stranded DNA.</text>
        <dbReference type="EC" id="5.6.2.2"/>
    </reaction>
</comment>
<comment type="cofactor">
    <cofactor evidence="1">
        <name>Mg(2+)</name>
        <dbReference type="ChEBI" id="CHEBI:18420"/>
    </cofactor>
    <cofactor evidence="1">
        <name>Mn(2+)</name>
        <dbReference type="ChEBI" id="CHEBI:29035"/>
    </cofactor>
    <cofactor evidence="1">
        <name>Ca(2+)</name>
        <dbReference type="ChEBI" id="CHEBI:29108"/>
    </cofactor>
    <text evidence="1">Binds two Mg(2+) per subunit. The magnesium ions form salt bridges with both the protein and the DNA. Can also accept other divalent metal cations, such as Mn(2+) or Ca(2+).</text>
</comment>
<comment type="subunit">
    <text evidence="1">Heterotetramer, composed of two GyrA and two GyrB chains. In the heterotetramer, GyrA contains the active site tyrosine that forms a transient covalent intermediate with DNA, while GyrB binds cofactors and catalyzes ATP hydrolysis.</text>
</comment>
<comment type="interaction">
    <interactant intactId="EBI-1585657">
        <id>O08399</id>
    </interactant>
    <interactant intactId="EBI-1584836">
        <id>O83050</id>
        <label>TP_0004</label>
    </interactant>
    <organismsDiffer>false</organismsDiffer>
    <experiments>2</experiments>
</comment>
<comment type="subcellular location">
    <subcellularLocation>
        <location evidence="1">Cytoplasm</location>
    </subcellularLocation>
</comment>
<comment type="miscellaneous">
    <text evidence="1">Few gyrases are as efficient as E.coli at forming negative supercoils. Not all organisms have 2 type II topoisomerases; in organisms with a single type II topoisomerase this enzyme also has to decatenate newly replicated chromosomes.</text>
</comment>
<comment type="similarity">
    <text evidence="1">Belongs to the type II topoisomerase GyrB family.</text>
</comment>
<keyword id="KW-0067">ATP-binding</keyword>
<keyword id="KW-0963">Cytoplasm</keyword>
<keyword id="KW-0238">DNA-binding</keyword>
<keyword id="KW-0413">Isomerase</keyword>
<keyword id="KW-0460">Magnesium</keyword>
<keyword id="KW-0479">Metal-binding</keyword>
<keyword id="KW-0547">Nucleotide-binding</keyword>
<keyword id="KW-1185">Reference proteome</keyword>
<keyword id="KW-0799">Topoisomerase</keyword>
<evidence type="ECO:0000255" key="1">
    <source>
        <dbReference type="HAMAP-Rule" id="MF_01898"/>
    </source>
</evidence>
<organism>
    <name type="scientific">Treponema pallidum (strain Nichols)</name>
    <dbReference type="NCBI Taxonomy" id="243276"/>
    <lineage>
        <taxon>Bacteria</taxon>
        <taxon>Pseudomonadati</taxon>
        <taxon>Spirochaetota</taxon>
        <taxon>Spirochaetia</taxon>
        <taxon>Spirochaetales</taxon>
        <taxon>Treponemataceae</taxon>
        <taxon>Treponema</taxon>
    </lineage>
</organism>
<protein>
    <recommendedName>
        <fullName evidence="1">DNA gyrase subunit B</fullName>
        <ecNumber evidence="1">5.6.2.2</ecNumber>
    </recommendedName>
</protein>
<reference key="1">
    <citation type="journal article" date="1997" name="FEMS Microbiol. Lett.">
        <title>Identification and characterization of the gyrB gene from Treponema pallidum subsp. pallidum.</title>
        <authorList>
            <person name="Stamm L.V."/>
            <person name="Greene S.R."/>
            <person name="Barnes N.Y."/>
        </authorList>
    </citation>
    <scope>NUCLEOTIDE SEQUENCE [GENOMIC DNA]</scope>
    <source>
        <strain>Nichols</strain>
    </source>
</reference>
<reference key="2">
    <citation type="journal article" date="1998" name="Science">
        <title>Complete genome sequence of Treponema pallidum, the syphilis spirochete.</title>
        <authorList>
            <person name="Fraser C.M."/>
            <person name="Norris S.J."/>
            <person name="Weinstock G.M."/>
            <person name="White O."/>
            <person name="Sutton G.G."/>
            <person name="Dodson R.J."/>
            <person name="Gwinn M.L."/>
            <person name="Hickey E.K."/>
            <person name="Clayton R.A."/>
            <person name="Ketchum K.A."/>
            <person name="Sodergren E."/>
            <person name="Hardham J.M."/>
            <person name="McLeod M.P."/>
            <person name="Salzberg S.L."/>
            <person name="Peterson J.D."/>
            <person name="Khalak H.G."/>
            <person name="Richardson D.L."/>
            <person name="Howell J.K."/>
            <person name="Chidambaram M."/>
            <person name="Utterback T.R."/>
            <person name="McDonald L.A."/>
            <person name="Artiach P."/>
            <person name="Bowman C."/>
            <person name="Cotton M.D."/>
            <person name="Fujii C."/>
            <person name="Garland S.A."/>
            <person name="Hatch B."/>
            <person name="Horst K."/>
            <person name="Roberts K.M."/>
            <person name="Sandusky M."/>
            <person name="Weidman J.F."/>
            <person name="Smith H.O."/>
            <person name="Venter J.C."/>
        </authorList>
    </citation>
    <scope>NUCLEOTIDE SEQUENCE [LARGE SCALE GENOMIC DNA]</scope>
    <source>
        <strain>Nichols</strain>
    </source>
</reference>
<dbReference type="EC" id="5.6.2.2" evidence="1"/>
<dbReference type="EMBL" id="U78094">
    <property type="protein sequence ID" value="AAB66715.1"/>
    <property type="molecule type" value="Genomic_DNA"/>
</dbReference>
<dbReference type="EMBL" id="AE000520">
    <property type="protein sequence ID" value="AAC65954.1"/>
    <property type="molecule type" value="Genomic_DNA"/>
</dbReference>
<dbReference type="PIR" id="H71254">
    <property type="entry name" value="H71254"/>
</dbReference>
<dbReference type="RefSeq" id="WP_010882450.1">
    <property type="nucleotide sequence ID" value="NC_021490.2"/>
</dbReference>
<dbReference type="SMR" id="O08399"/>
<dbReference type="IntAct" id="O08399">
    <property type="interactions" value="3"/>
</dbReference>
<dbReference type="STRING" id="243276.TP_1006"/>
<dbReference type="EnsemblBacteria" id="AAC65954">
    <property type="protein sequence ID" value="AAC65954"/>
    <property type="gene ID" value="TP_1006"/>
</dbReference>
<dbReference type="GeneID" id="93876753"/>
<dbReference type="KEGG" id="tpa:TP_1006"/>
<dbReference type="KEGG" id="tpw:TPANIC_1006"/>
<dbReference type="eggNOG" id="COG0187">
    <property type="taxonomic scope" value="Bacteria"/>
</dbReference>
<dbReference type="HOGENOM" id="CLU_006146_1_2_12"/>
<dbReference type="OrthoDB" id="9802808at2"/>
<dbReference type="Proteomes" id="UP000000811">
    <property type="component" value="Chromosome"/>
</dbReference>
<dbReference type="GO" id="GO:0005694">
    <property type="term" value="C:chromosome"/>
    <property type="evidence" value="ECO:0007669"/>
    <property type="project" value="InterPro"/>
</dbReference>
<dbReference type="GO" id="GO:0005737">
    <property type="term" value="C:cytoplasm"/>
    <property type="evidence" value="ECO:0007669"/>
    <property type="project" value="UniProtKB-SubCell"/>
</dbReference>
<dbReference type="GO" id="GO:0005524">
    <property type="term" value="F:ATP binding"/>
    <property type="evidence" value="ECO:0007669"/>
    <property type="project" value="UniProtKB-UniRule"/>
</dbReference>
<dbReference type="GO" id="GO:0003677">
    <property type="term" value="F:DNA binding"/>
    <property type="evidence" value="ECO:0007669"/>
    <property type="project" value="UniProtKB-KW"/>
</dbReference>
<dbReference type="GO" id="GO:0003918">
    <property type="term" value="F:DNA topoisomerase type II (double strand cut, ATP-hydrolyzing) activity"/>
    <property type="evidence" value="ECO:0007669"/>
    <property type="project" value="UniProtKB-UniRule"/>
</dbReference>
<dbReference type="GO" id="GO:0046872">
    <property type="term" value="F:metal ion binding"/>
    <property type="evidence" value="ECO:0007669"/>
    <property type="project" value="UniProtKB-KW"/>
</dbReference>
<dbReference type="GO" id="GO:0006265">
    <property type="term" value="P:DNA topological change"/>
    <property type="evidence" value="ECO:0007669"/>
    <property type="project" value="UniProtKB-UniRule"/>
</dbReference>
<dbReference type="GO" id="GO:0006261">
    <property type="term" value="P:DNA-templated DNA replication"/>
    <property type="evidence" value="ECO:0007669"/>
    <property type="project" value="UniProtKB-UniRule"/>
</dbReference>
<dbReference type="CDD" id="cd16928">
    <property type="entry name" value="HATPase_GyrB-like"/>
    <property type="match status" value="1"/>
</dbReference>
<dbReference type="CDD" id="cd00822">
    <property type="entry name" value="TopoII_Trans_DNA_gyrase"/>
    <property type="match status" value="1"/>
</dbReference>
<dbReference type="CDD" id="cd03366">
    <property type="entry name" value="TOPRIM_TopoIIA_GyrB"/>
    <property type="match status" value="1"/>
</dbReference>
<dbReference type="FunFam" id="3.30.230.10:FF:000005">
    <property type="entry name" value="DNA gyrase subunit B"/>
    <property type="match status" value="1"/>
</dbReference>
<dbReference type="FunFam" id="3.30.565.10:FF:000002">
    <property type="entry name" value="DNA gyrase subunit B"/>
    <property type="match status" value="1"/>
</dbReference>
<dbReference type="FunFam" id="3.40.50.670:FF:000002">
    <property type="entry name" value="DNA gyrase subunit B"/>
    <property type="match status" value="1"/>
</dbReference>
<dbReference type="Gene3D" id="3.30.230.10">
    <property type="match status" value="1"/>
</dbReference>
<dbReference type="Gene3D" id="3.40.50.670">
    <property type="match status" value="1"/>
</dbReference>
<dbReference type="Gene3D" id="3.30.565.10">
    <property type="entry name" value="Histidine kinase-like ATPase, C-terminal domain"/>
    <property type="match status" value="1"/>
</dbReference>
<dbReference type="HAMAP" id="MF_01898">
    <property type="entry name" value="GyrB"/>
    <property type="match status" value="1"/>
</dbReference>
<dbReference type="InterPro" id="IPR002288">
    <property type="entry name" value="DNA_gyrase_B_C"/>
</dbReference>
<dbReference type="InterPro" id="IPR011557">
    <property type="entry name" value="GyrB"/>
</dbReference>
<dbReference type="InterPro" id="IPR036890">
    <property type="entry name" value="HATPase_C_sf"/>
</dbReference>
<dbReference type="InterPro" id="IPR020568">
    <property type="entry name" value="Ribosomal_Su5_D2-typ_SF"/>
</dbReference>
<dbReference type="InterPro" id="IPR014721">
    <property type="entry name" value="Ribsml_uS5_D2-typ_fold_subgr"/>
</dbReference>
<dbReference type="InterPro" id="IPR001241">
    <property type="entry name" value="Topo_IIA"/>
</dbReference>
<dbReference type="InterPro" id="IPR013760">
    <property type="entry name" value="Topo_IIA-like_dom_sf"/>
</dbReference>
<dbReference type="InterPro" id="IPR000565">
    <property type="entry name" value="Topo_IIA_B"/>
</dbReference>
<dbReference type="InterPro" id="IPR013759">
    <property type="entry name" value="Topo_IIA_B_C"/>
</dbReference>
<dbReference type="InterPro" id="IPR013506">
    <property type="entry name" value="Topo_IIA_bsu_dom2"/>
</dbReference>
<dbReference type="InterPro" id="IPR018522">
    <property type="entry name" value="TopoIIA_CS"/>
</dbReference>
<dbReference type="InterPro" id="IPR006171">
    <property type="entry name" value="TOPRIM_dom"/>
</dbReference>
<dbReference type="InterPro" id="IPR034160">
    <property type="entry name" value="TOPRIM_GyrB"/>
</dbReference>
<dbReference type="NCBIfam" id="TIGR01059">
    <property type="entry name" value="gyrB"/>
    <property type="match status" value="1"/>
</dbReference>
<dbReference type="NCBIfam" id="NF004189">
    <property type="entry name" value="PRK05644.1"/>
    <property type="match status" value="1"/>
</dbReference>
<dbReference type="NCBIfam" id="NF011501">
    <property type="entry name" value="PRK14939.1"/>
    <property type="match status" value="1"/>
</dbReference>
<dbReference type="PANTHER" id="PTHR45866:SF1">
    <property type="entry name" value="DNA GYRASE SUBUNIT B, MITOCHONDRIAL"/>
    <property type="match status" value="1"/>
</dbReference>
<dbReference type="PANTHER" id="PTHR45866">
    <property type="entry name" value="DNA GYRASE/TOPOISOMERASE SUBUNIT B"/>
    <property type="match status" value="1"/>
</dbReference>
<dbReference type="Pfam" id="PF00204">
    <property type="entry name" value="DNA_gyraseB"/>
    <property type="match status" value="1"/>
</dbReference>
<dbReference type="Pfam" id="PF00986">
    <property type="entry name" value="DNA_gyraseB_C"/>
    <property type="match status" value="1"/>
</dbReference>
<dbReference type="Pfam" id="PF02518">
    <property type="entry name" value="HATPase_c"/>
    <property type="match status" value="1"/>
</dbReference>
<dbReference type="Pfam" id="PF01751">
    <property type="entry name" value="Toprim"/>
    <property type="match status" value="1"/>
</dbReference>
<dbReference type="PRINTS" id="PR01159">
    <property type="entry name" value="DNAGYRASEB"/>
</dbReference>
<dbReference type="PRINTS" id="PR00418">
    <property type="entry name" value="TPI2FAMILY"/>
</dbReference>
<dbReference type="SMART" id="SM00387">
    <property type="entry name" value="HATPase_c"/>
    <property type="match status" value="1"/>
</dbReference>
<dbReference type="SMART" id="SM00433">
    <property type="entry name" value="TOP2c"/>
    <property type="match status" value="1"/>
</dbReference>
<dbReference type="SUPFAM" id="SSF55874">
    <property type="entry name" value="ATPase domain of HSP90 chaperone/DNA topoisomerase II/histidine kinase"/>
    <property type="match status" value="1"/>
</dbReference>
<dbReference type="SUPFAM" id="SSF54211">
    <property type="entry name" value="Ribosomal protein S5 domain 2-like"/>
    <property type="match status" value="1"/>
</dbReference>
<dbReference type="SUPFAM" id="SSF56719">
    <property type="entry name" value="Type II DNA topoisomerase"/>
    <property type="match status" value="1"/>
</dbReference>
<dbReference type="PROSITE" id="PS00177">
    <property type="entry name" value="TOPOISOMERASE_II"/>
    <property type="match status" value="1"/>
</dbReference>
<dbReference type="PROSITE" id="PS50880">
    <property type="entry name" value="TOPRIM"/>
    <property type="match status" value="1"/>
</dbReference>
<proteinExistence type="evidence at protein level"/>
<sequence length="637" mass="70910">MGIEYSASSITVLEGLEAVRKRPGMYIGSTGPNGLHHLVYEVVDNCIDEAMAGYCDRITVVLEQGNVVRVEDNGRGIPVDVHPHEGVSALEVVLTKLHAGGKFDKKSYKVSGGLHGVGVSVVNALSLWVEVTVYRDGAEYYQKFNVGMPLAPVEKRGVSEKRGTIIRWQADPSIFKETVAYDFDVLLTRLRELAFLNSTVVIQLRDERLATAKQVEFAFEGGIRHFVSYLNRGKSVVPERPLYIEGSKSDVLVEVALQYHDGYTENVQSFVNDINTREGGTHLEGFKSALTRVANDFLKKSPKLAKKIEREEKLVGEDVRAGLTVVLSVKIPEPQFEGQTKTKLGNSEVRGIVDSLVGERLTLYFEQNPGVLTKILEKSIAEAQARLAARRAKEAARRKSGMDSFGLPGKLADCSLKDPAKCEVYIVEGDSAGGSAKKGRDSKTQAILPLWGKMLNVEKTRLDKVLHNEKLQPIIATLGTGVGKDFDLTRIRYHKVIIMADADVDGSHIRTLLLTFFFRYLPQIIEAGYVYLAMPPLYRIAWSKKELYVYSDTERDEALESIGKKSGVAVQRYKGLGEMDGTQLWETTMNPVRRKMMQVVLSDAVEADRVFSTLMGEDVEPRRKFIEENAIYARLDV</sequence>